<accession>Q5SKV7</accession>
<name>MDH_THET8</name>
<dbReference type="EC" id="1.1.1.37" evidence="1"/>
<dbReference type="EMBL" id="AP008226">
    <property type="protein sequence ID" value="BAD70359.1"/>
    <property type="molecule type" value="Genomic_DNA"/>
</dbReference>
<dbReference type="RefSeq" id="WP_011172623.1">
    <property type="nucleotide sequence ID" value="NC_006461.1"/>
</dbReference>
<dbReference type="RefSeq" id="YP_143802.1">
    <property type="nucleotide sequence ID" value="NC_006461.1"/>
</dbReference>
<dbReference type="SMR" id="Q5SKV7"/>
<dbReference type="EnsemblBacteria" id="BAD70359">
    <property type="protein sequence ID" value="BAD70359"/>
    <property type="gene ID" value="BAD70359"/>
</dbReference>
<dbReference type="GeneID" id="3168364"/>
<dbReference type="KEGG" id="ttj:TTHA0536"/>
<dbReference type="PATRIC" id="fig|300852.9.peg.535"/>
<dbReference type="eggNOG" id="COG0039">
    <property type="taxonomic scope" value="Bacteria"/>
</dbReference>
<dbReference type="HOGENOM" id="CLU_040727_2_0_0"/>
<dbReference type="PhylomeDB" id="Q5SKV7"/>
<dbReference type="Proteomes" id="UP000000532">
    <property type="component" value="Chromosome"/>
</dbReference>
<dbReference type="GO" id="GO:0030060">
    <property type="term" value="F:L-malate dehydrogenase (NAD+) activity"/>
    <property type="evidence" value="ECO:0007669"/>
    <property type="project" value="UniProtKB-UniRule"/>
</dbReference>
<dbReference type="GO" id="GO:0006108">
    <property type="term" value="P:malate metabolic process"/>
    <property type="evidence" value="ECO:0007669"/>
    <property type="project" value="InterPro"/>
</dbReference>
<dbReference type="GO" id="GO:0006099">
    <property type="term" value="P:tricarboxylic acid cycle"/>
    <property type="evidence" value="ECO:0007669"/>
    <property type="project" value="UniProtKB-UniRule"/>
</dbReference>
<dbReference type="CDD" id="cd01338">
    <property type="entry name" value="MDH_chloroplast-like"/>
    <property type="match status" value="1"/>
</dbReference>
<dbReference type="FunFam" id="3.40.50.720:FF:000010">
    <property type="entry name" value="Malate dehydrogenase"/>
    <property type="match status" value="1"/>
</dbReference>
<dbReference type="FunFam" id="3.90.110.10:FF:000002">
    <property type="entry name" value="Malate dehydrogenase"/>
    <property type="match status" value="1"/>
</dbReference>
<dbReference type="Gene3D" id="3.90.110.10">
    <property type="entry name" value="Lactate dehydrogenase/glycoside hydrolase, family 4, C-terminal"/>
    <property type="match status" value="1"/>
</dbReference>
<dbReference type="Gene3D" id="3.40.50.720">
    <property type="entry name" value="NAD(P)-binding Rossmann-like Domain"/>
    <property type="match status" value="1"/>
</dbReference>
<dbReference type="HAMAP" id="MF_01517">
    <property type="entry name" value="Malate_dehydrog_2"/>
    <property type="match status" value="1"/>
</dbReference>
<dbReference type="InterPro" id="IPR001557">
    <property type="entry name" value="L-lactate/malate_DH"/>
</dbReference>
<dbReference type="InterPro" id="IPR022383">
    <property type="entry name" value="Lactate/malate_DH_C"/>
</dbReference>
<dbReference type="InterPro" id="IPR001236">
    <property type="entry name" value="Lactate/malate_DH_N"/>
</dbReference>
<dbReference type="InterPro" id="IPR015955">
    <property type="entry name" value="Lactate_DH/Glyco_Ohase_4_C"/>
</dbReference>
<dbReference type="InterPro" id="IPR001252">
    <property type="entry name" value="Malate_DH_AS"/>
</dbReference>
<dbReference type="InterPro" id="IPR010945">
    <property type="entry name" value="Malate_DH_type2"/>
</dbReference>
<dbReference type="InterPro" id="IPR036291">
    <property type="entry name" value="NAD(P)-bd_dom_sf"/>
</dbReference>
<dbReference type="NCBIfam" id="TIGR01759">
    <property type="entry name" value="MalateDH-SF1"/>
    <property type="match status" value="1"/>
</dbReference>
<dbReference type="NCBIfam" id="NF003916">
    <property type="entry name" value="PRK05442.1"/>
    <property type="match status" value="1"/>
</dbReference>
<dbReference type="PANTHER" id="PTHR23382">
    <property type="entry name" value="MALATE DEHYDROGENASE"/>
    <property type="match status" value="1"/>
</dbReference>
<dbReference type="Pfam" id="PF02866">
    <property type="entry name" value="Ldh_1_C"/>
    <property type="match status" value="1"/>
</dbReference>
<dbReference type="Pfam" id="PF00056">
    <property type="entry name" value="Ldh_1_N"/>
    <property type="match status" value="1"/>
</dbReference>
<dbReference type="PIRSF" id="PIRSF000102">
    <property type="entry name" value="Lac_mal_DH"/>
    <property type="match status" value="1"/>
</dbReference>
<dbReference type="SUPFAM" id="SSF56327">
    <property type="entry name" value="LDH C-terminal domain-like"/>
    <property type="match status" value="1"/>
</dbReference>
<dbReference type="SUPFAM" id="SSF51735">
    <property type="entry name" value="NAD(P)-binding Rossmann-fold domains"/>
    <property type="match status" value="1"/>
</dbReference>
<dbReference type="PROSITE" id="PS00068">
    <property type="entry name" value="MDH"/>
    <property type="match status" value="1"/>
</dbReference>
<sequence length="327" mass="35426">MKAPVRVAVTGAAGQIGYSLLFRIAAGEMLGKDQPVILQLLEIPQAMKALEGVVMELEDCAFPLLAGLEATDDPKVAFKDADYALLVGAAPRKAGMERRDLLQVNGKIFTEQGRALAEVAKKDVKVLVVGNPANTNALIAYKNAPGLNPRNFTAMTRLDHNRAKAQLAKKTGTGVDRIRRMTVWGNHSSTMFPDLFHAEVDGRPALELVDMEWYEKVFIPTVAQRGAAIIQARGASSAASAANAAIEHIRDWALGTPEGDWVSMAVPSQGEYGIPEGIVYSFPVTAKDGAYRVVEGLEINEFARKRMEITAQELLDEMEQVKALGLI</sequence>
<protein>
    <recommendedName>
        <fullName evidence="1">Malate dehydrogenase</fullName>
        <ecNumber evidence="1">1.1.1.37</ecNumber>
    </recommendedName>
</protein>
<gene>
    <name evidence="1" type="primary">mdh</name>
    <name type="ordered locus">TTHA0536</name>
</gene>
<organism>
    <name type="scientific">Thermus thermophilus (strain ATCC 27634 / DSM 579 / HB8)</name>
    <dbReference type="NCBI Taxonomy" id="300852"/>
    <lineage>
        <taxon>Bacteria</taxon>
        <taxon>Thermotogati</taxon>
        <taxon>Deinococcota</taxon>
        <taxon>Deinococci</taxon>
        <taxon>Thermales</taxon>
        <taxon>Thermaceae</taxon>
        <taxon>Thermus</taxon>
    </lineage>
</organism>
<keyword id="KW-0520">NAD</keyword>
<keyword id="KW-0560">Oxidoreductase</keyword>
<keyword id="KW-1185">Reference proteome</keyword>
<keyword id="KW-0816">Tricarboxylic acid cycle</keyword>
<proteinExistence type="inferred from homology"/>
<evidence type="ECO:0000255" key="1">
    <source>
        <dbReference type="HAMAP-Rule" id="MF_01517"/>
    </source>
</evidence>
<comment type="function">
    <text evidence="1">Catalyzes the reversible oxidation of malate to oxaloacetate.</text>
</comment>
<comment type="catalytic activity">
    <reaction evidence="1">
        <text>(S)-malate + NAD(+) = oxaloacetate + NADH + H(+)</text>
        <dbReference type="Rhea" id="RHEA:21432"/>
        <dbReference type="ChEBI" id="CHEBI:15378"/>
        <dbReference type="ChEBI" id="CHEBI:15589"/>
        <dbReference type="ChEBI" id="CHEBI:16452"/>
        <dbReference type="ChEBI" id="CHEBI:57540"/>
        <dbReference type="ChEBI" id="CHEBI:57945"/>
        <dbReference type="EC" id="1.1.1.37"/>
    </reaction>
</comment>
<comment type="similarity">
    <text evidence="1">Belongs to the LDH/MDH superfamily. MDH type 2 family.</text>
</comment>
<reference key="1">
    <citation type="submission" date="2004-11" db="EMBL/GenBank/DDBJ databases">
        <title>Complete genome sequence of Thermus thermophilus HB8.</title>
        <authorList>
            <person name="Masui R."/>
            <person name="Kurokawa K."/>
            <person name="Nakagawa N."/>
            <person name="Tokunaga F."/>
            <person name="Koyama Y."/>
            <person name="Shibata T."/>
            <person name="Oshima T."/>
            <person name="Yokoyama S."/>
            <person name="Yasunaga T."/>
            <person name="Kuramitsu S."/>
        </authorList>
    </citation>
    <scope>NUCLEOTIDE SEQUENCE [LARGE SCALE GENOMIC DNA]</scope>
    <source>
        <strain>ATCC 27634 / DSM 579 / HB8</strain>
    </source>
</reference>
<feature type="chain" id="PRO_0000113399" description="Malate dehydrogenase">
    <location>
        <begin position="1"/>
        <end position="327"/>
    </location>
</feature>
<feature type="active site" description="Proton acceptor" evidence="1">
    <location>
        <position position="187"/>
    </location>
</feature>
<feature type="binding site" evidence="1">
    <location>
        <begin position="11"/>
        <end position="17"/>
    </location>
    <ligand>
        <name>NAD(+)</name>
        <dbReference type="ChEBI" id="CHEBI:57540"/>
    </ligand>
</feature>
<feature type="binding site" evidence="1">
    <location>
        <position position="92"/>
    </location>
    <ligand>
        <name>substrate</name>
    </ligand>
</feature>
<feature type="binding site" evidence="1">
    <location>
        <position position="98"/>
    </location>
    <ligand>
        <name>substrate</name>
    </ligand>
</feature>
<feature type="binding site" evidence="1">
    <location>
        <position position="105"/>
    </location>
    <ligand>
        <name>NAD(+)</name>
        <dbReference type="ChEBI" id="CHEBI:57540"/>
    </ligand>
</feature>
<feature type="binding site" evidence="1">
    <location>
        <position position="112"/>
    </location>
    <ligand>
        <name>NAD(+)</name>
        <dbReference type="ChEBI" id="CHEBI:57540"/>
    </ligand>
</feature>
<feature type="binding site" evidence="1">
    <location>
        <begin position="129"/>
        <end position="131"/>
    </location>
    <ligand>
        <name>NAD(+)</name>
        <dbReference type="ChEBI" id="CHEBI:57540"/>
    </ligand>
</feature>
<feature type="binding site" evidence="1">
    <location>
        <position position="131"/>
    </location>
    <ligand>
        <name>substrate</name>
    </ligand>
</feature>
<feature type="binding site" evidence="1">
    <location>
        <position position="162"/>
    </location>
    <ligand>
        <name>substrate</name>
    </ligand>
</feature>